<organism>
    <name type="scientific">Treponema pallidum subsp. pallidum (strain SS14)</name>
    <dbReference type="NCBI Taxonomy" id="455434"/>
    <lineage>
        <taxon>Bacteria</taxon>
        <taxon>Pseudomonadati</taxon>
        <taxon>Spirochaetota</taxon>
        <taxon>Spirochaetia</taxon>
        <taxon>Spirochaetales</taxon>
        <taxon>Treponemataceae</taxon>
        <taxon>Treponema</taxon>
    </lineage>
</organism>
<sequence>MDLSLLRSLTGPHDLKSLSPEQVRALAQEVRQEILRVVSANGGHLASNLGVVELTIALHRVFSCPHDVVVWDVGHQCYAHKLLTGRAGRFHTLRQKDGISGFPRRDESPYDAFGTGHSSTALSAASGILSALRYRGKSGKVVAVVGDGALTAGLAFEALLNVGRSCSDLIVILNDNKMSISPNTGSFSRYLSTLTVKGPYQKLKTRLRRALQTVPLVGRPACRALSRLKRSARTLLYQSNIFADFGFEYVGPLNGHHIEDLERVLNDAKKLTRPTLLHVQTVKGKGYPFAEQNPTDFHGVGPFNLAEGIVEKKDALTFTEAFSHTLLNAARTDDRVVAITAAMTGGTGLGLFSHIYPERFFDVGIAEQHAVTFAAGLACAGVKPVVAVYSTFLQRAVDQVIHDVAVQNLPVIFALDRAGAVPHDGETHQGLFDLSILRAVPNINILCPASAHELSLLFGWALAQDTPVAIRYPKALCPPEEDGFSTPVHTGRGVLITRENECNVLLVCTGGVFPEVTAAANTLARKGIFADIYNVRFVKPVDEDYFLDLVGRYRSVLFVEDGVKIGGIAEALQALLNTRHPAPCSDVLAFQDMFYPHGSRAQVLAAAGLSAPHIAARAEWLLAHSVGQIR</sequence>
<evidence type="ECO:0000255" key="1">
    <source>
        <dbReference type="HAMAP-Rule" id="MF_00315"/>
    </source>
</evidence>
<protein>
    <recommendedName>
        <fullName evidence="1">1-deoxy-D-xylulose-5-phosphate synthase</fullName>
        <ecNumber evidence="1">2.2.1.7</ecNumber>
    </recommendedName>
    <alternativeName>
        <fullName evidence="1">1-deoxyxylulose-5-phosphate synthase</fullName>
        <shortName evidence="1">DXP synthase</shortName>
        <shortName evidence="1">DXPS</shortName>
    </alternativeName>
</protein>
<proteinExistence type="inferred from homology"/>
<reference key="1">
    <citation type="journal article" date="2008" name="BMC Microbiol.">
        <title>Complete genome sequence of Treponema pallidum ssp. pallidum strain SS14 determined with oligonucleotide arrays.</title>
        <authorList>
            <person name="Matejkova P."/>
            <person name="Strouhal M."/>
            <person name="Smajs D."/>
            <person name="Norris S.J."/>
            <person name="Palzkill T."/>
            <person name="Petrosino J.F."/>
            <person name="Sodergren E."/>
            <person name="Norton J.E."/>
            <person name="Singh J."/>
            <person name="Richmond T.A."/>
            <person name="Molla M.N."/>
            <person name="Albert T.J."/>
            <person name="Weinstock G.M."/>
        </authorList>
    </citation>
    <scope>NUCLEOTIDE SEQUENCE [LARGE SCALE GENOMIC DNA]</scope>
    <source>
        <strain>SS14</strain>
    </source>
</reference>
<name>DXS_TREPS</name>
<keyword id="KW-0414">Isoprene biosynthesis</keyword>
<keyword id="KW-0460">Magnesium</keyword>
<keyword id="KW-0479">Metal-binding</keyword>
<keyword id="KW-0784">Thiamine biosynthesis</keyword>
<keyword id="KW-0786">Thiamine pyrophosphate</keyword>
<keyword id="KW-0808">Transferase</keyword>
<feature type="chain" id="PRO_1000115778" description="1-deoxy-D-xylulose-5-phosphate synthase">
    <location>
        <begin position="1"/>
        <end position="630"/>
    </location>
</feature>
<feature type="binding site" evidence="1">
    <location>
        <position position="75"/>
    </location>
    <ligand>
        <name>thiamine diphosphate</name>
        <dbReference type="ChEBI" id="CHEBI:58937"/>
    </ligand>
</feature>
<feature type="binding site" evidence="1">
    <location>
        <begin position="116"/>
        <end position="118"/>
    </location>
    <ligand>
        <name>thiamine diphosphate</name>
        <dbReference type="ChEBI" id="CHEBI:58937"/>
    </ligand>
</feature>
<feature type="binding site" evidence="1">
    <location>
        <position position="147"/>
    </location>
    <ligand>
        <name>Mg(2+)</name>
        <dbReference type="ChEBI" id="CHEBI:18420"/>
    </ligand>
</feature>
<feature type="binding site" evidence="1">
    <location>
        <begin position="148"/>
        <end position="149"/>
    </location>
    <ligand>
        <name>thiamine diphosphate</name>
        <dbReference type="ChEBI" id="CHEBI:58937"/>
    </ligand>
</feature>
<feature type="binding site" evidence="1">
    <location>
        <position position="176"/>
    </location>
    <ligand>
        <name>Mg(2+)</name>
        <dbReference type="ChEBI" id="CHEBI:18420"/>
    </ligand>
</feature>
<feature type="binding site" evidence="1">
    <location>
        <position position="176"/>
    </location>
    <ligand>
        <name>thiamine diphosphate</name>
        <dbReference type="ChEBI" id="CHEBI:58937"/>
    </ligand>
</feature>
<feature type="binding site" evidence="1">
    <location>
        <position position="287"/>
    </location>
    <ligand>
        <name>thiamine diphosphate</name>
        <dbReference type="ChEBI" id="CHEBI:58937"/>
    </ligand>
</feature>
<feature type="binding site" evidence="1">
    <location>
        <position position="367"/>
    </location>
    <ligand>
        <name>thiamine diphosphate</name>
        <dbReference type="ChEBI" id="CHEBI:58937"/>
    </ligand>
</feature>
<comment type="function">
    <text evidence="1">Catalyzes the acyloin condensation reaction between C atoms 2 and 3 of pyruvate and glyceraldehyde 3-phosphate to yield 1-deoxy-D-xylulose-5-phosphate (DXP).</text>
</comment>
<comment type="catalytic activity">
    <reaction evidence="1">
        <text>D-glyceraldehyde 3-phosphate + pyruvate + H(+) = 1-deoxy-D-xylulose 5-phosphate + CO2</text>
        <dbReference type="Rhea" id="RHEA:12605"/>
        <dbReference type="ChEBI" id="CHEBI:15361"/>
        <dbReference type="ChEBI" id="CHEBI:15378"/>
        <dbReference type="ChEBI" id="CHEBI:16526"/>
        <dbReference type="ChEBI" id="CHEBI:57792"/>
        <dbReference type="ChEBI" id="CHEBI:59776"/>
        <dbReference type="EC" id="2.2.1.7"/>
    </reaction>
</comment>
<comment type="cofactor">
    <cofactor evidence="1">
        <name>Mg(2+)</name>
        <dbReference type="ChEBI" id="CHEBI:18420"/>
    </cofactor>
    <text evidence="1">Binds 1 Mg(2+) ion per subunit.</text>
</comment>
<comment type="cofactor">
    <cofactor evidence="1">
        <name>thiamine diphosphate</name>
        <dbReference type="ChEBI" id="CHEBI:58937"/>
    </cofactor>
    <text evidence="1">Binds 1 thiamine pyrophosphate per subunit.</text>
</comment>
<comment type="pathway">
    <text evidence="1">Metabolic intermediate biosynthesis; 1-deoxy-D-xylulose 5-phosphate biosynthesis; 1-deoxy-D-xylulose 5-phosphate from D-glyceraldehyde 3-phosphate and pyruvate: step 1/1.</text>
</comment>
<comment type="subunit">
    <text evidence="1">Homodimer.</text>
</comment>
<comment type="similarity">
    <text evidence="1">Belongs to the transketolase family. DXPS subfamily.</text>
</comment>
<accession>B2S462</accession>
<dbReference type="EC" id="2.2.1.7" evidence="1"/>
<dbReference type="EMBL" id="CP000805">
    <property type="protein sequence ID" value="ACD71241.1"/>
    <property type="molecule type" value="Genomic_DNA"/>
</dbReference>
<dbReference type="RefSeq" id="WP_010882268.1">
    <property type="nucleotide sequence ID" value="NC_021508.1"/>
</dbReference>
<dbReference type="SMR" id="B2S462"/>
<dbReference type="GeneID" id="93876582"/>
<dbReference type="KEGG" id="tpp:TPASS_0824"/>
<dbReference type="PATRIC" id="fig|455434.6.peg.813"/>
<dbReference type="UniPathway" id="UPA00064">
    <property type="reaction ID" value="UER00091"/>
</dbReference>
<dbReference type="Proteomes" id="UP000001202">
    <property type="component" value="Chromosome"/>
</dbReference>
<dbReference type="GO" id="GO:0005829">
    <property type="term" value="C:cytosol"/>
    <property type="evidence" value="ECO:0007669"/>
    <property type="project" value="TreeGrafter"/>
</dbReference>
<dbReference type="GO" id="GO:0008661">
    <property type="term" value="F:1-deoxy-D-xylulose-5-phosphate synthase activity"/>
    <property type="evidence" value="ECO:0007669"/>
    <property type="project" value="UniProtKB-UniRule"/>
</dbReference>
<dbReference type="GO" id="GO:0000287">
    <property type="term" value="F:magnesium ion binding"/>
    <property type="evidence" value="ECO:0007669"/>
    <property type="project" value="UniProtKB-UniRule"/>
</dbReference>
<dbReference type="GO" id="GO:0030976">
    <property type="term" value="F:thiamine pyrophosphate binding"/>
    <property type="evidence" value="ECO:0007669"/>
    <property type="project" value="UniProtKB-UniRule"/>
</dbReference>
<dbReference type="GO" id="GO:0052865">
    <property type="term" value="P:1-deoxy-D-xylulose 5-phosphate biosynthetic process"/>
    <property type="evidence" value="ECO:0007669"/>
    <property type="project" value="UniProtKB-UniPathway"/>
</dbReference>
<dbReference type="GO" id="GO:0019288">
    <property type="term" value="P:isopentenyl diphosphate biosynthetic process, methylerythritol 4-phosphate pathway"/>
    <property type="evidence" value="ECO:0007669"/>
    <property type="project" value="TreeGrafter"/>
</dbReference>
<dbReference type="GO" id="GO:0016114">
    <property type="term" value="P:terpenoid biosynthetic process"/>
    <property type="evidence" value="ECO:0007669"/>
    <property type="project" value="UniProtKB-UniRule"/>
</dbReference>
<dbReference type="GO" id="GO:0009228">
    <property type="term" value="P:thiamine biosynthetic process"/>
    <property type="evidence" value="ECO:0007669"/>
    <property type="project" value="UniProtKB-UniRule"/>
</dbReference>
<dbReference type="CDD" id="cd02007">
    <property type="entry name" value="TPP_DXS"/>
    <property type="match status" value="1"/>
</dbReference>
<dbReference type="CDD" id="cd07033">
    <property type="entry name" value="TPP_PYR_DXS_TK_like"/>
    <property type="match status" value="1"/>
</dbReference>
<dbReference type="Gene3D" id="3.40.50.920">
    <property type="match status" value="1"/>
</dbReference>
<dbReference type="Gene3D" id="3.40.50.970">
    <property type="match status" value="2"/>
</dbReference>
<dbReference type="HAMAP" id="MF_00315">
    <property type="entry name" value="DXP_synth"/>
    <property type="match status" value="1"/>
</dbReference>
<dbReference type="InterPro" id="IPR005477">
    <property type="entry name" value="Dxylulose-5-P_synthase"/>
</dbReference>
<dbReference type="InterPro" id="IPR029061">
    <property type="entry name" value="THDP-binding"/>
</dbReference>
<dbReference type="InterPro" id="IPR009014">
    <property type="entry name" value="Transketo_C/PFOR_II"/>
</dbReference>
<dbReference type="InterPro" id="IPR005475">
    <property type="entry name" value="Transketolase-like_Pyr-bd"/>
</dbReference>
<dbReference type="InterPro" id="IPR020826">
    <property type="entry name" value="Transketolase_BS"/>
</dbReference>
<dbReference type="InterPro" id="IPR033248">
    <property type="entry name" value="Transketolase_C"/>
</dbReference>
<dbReference type="NCBIfam" id="TIGR00204">
    <property type="entry name" value="dxs"/>
    <property type="match status" value="1"/>
</dbReference>
<dbReference type="NCBIfam" id="NF003933">
    <property type="entry name" value="PRK05444.2-2"/>
    <property type="match status" value="1"/>
</dbReference>
<dbReference type="PANTHER" id="PTHR43322">
    <property type="entry name" value="1-D-DEOXYXYLULOSE 5-PHOSPHATE SYNTHASE-RELATED"/>
    <property type="match status" value="1"/>
</dbReference>
<dbReference type="PANTHER" id="PTHR43322:SF5">
    <property type="entry name" value="1-DEOXY-D-XYLULOSE-5-PHOSPHATE SYNTHASE, CHLOROPLASTIC"/>
    <property type="match status" value="1"/>
</dbReference>
<dbReference type="Pfam" id="PF13292">
    <property type="entry name" value="DXP_synthase_N"/>
    <property type="match status" value="1"/>
</dbReference>
<dbReference type="Pfam" id="PF02779">
    <property type="entry name" value="Transket_pyr"/>
    <property type="match status" value="1"/>
</dbReference>
<dbReference type="Pfam" id="PF02780">
    <property type="entry name" value="Transketolase_C"/>
    <property type="match status" value="1"/>
</dbReference>
<dbReference type="SMART" id="SM00861">
    <property type="entry name" value="Transket_pyr"/>
    <property type="match status" value="1"/>
</dbReference>
<dbReference type="SUPFAM" id="SSF52518">
    <property type="entry name" value="Thiamin diphosphate-binding fold (THDP-binding)"/>
    <property type="match status" value="1"/>
</dbReference>
<dbReference type="SUPFAM" id="SSF52922">
    <property type="entry name" value="TK C-terminal domain-like"/>
    <property type="match status" value="1"/>
</dbReference>
<dbReference type="PROSITE" id="PS00802">
    <property type="entry name" value="TRANSKETOLASE_2"/>
    <property type="match status" value="1"/>
</dbReference>
<gene>
    <name evidence="1" type="primary">dxs</name>
    <name type="ordered locus">TPASS_0824</name>
</gene>